<sequence>DIVLTQSPASLAVSLGQRATISCRASZSVNWYGNSFMZWYZZKPGZPPKLLIYRASNLZSGIPARFSGSGSRTBFTLTIBPVZABDVATYFCZZSBZAPWTFGSGTKLEIKR</sequence>
<protein>
    <recommendedName>
        <fullName>Ig kappa chain V-III region TEPC 124</fullName>
    </recommendedName>
</protein>
<proteinExistence type="evidence at protein level"/>
<organism>
    <name type="scientific">Mus musculus</name>
    <name type="common">Mouse</name>
    <dbReference type="NCBI Taxonomy" id="10090"/>
    <lineage>
        <taxon>Eukaryota</taxon>
        <taxon>Metazoa</taxon>
        <taxon>Chordata</taxon>
        <taxon>Craniata</taxon>
        <taxon>Vertebrata</taxon>
        <taxon>Euteleostomi</taxon>
        <taxon>Mammalia</taxon>
        <taxon>Eutheria</taxon>
        <taxon>Euarchontoglires</taxon>
        <taxon>Glires</taxon>
        <taxon>Rodentia</taxon>
        <taxon>Myomorpha</taxon>
        <taxon>Muroidea</taxon>
        <taxon>Muridae</taxon>
        <taxon>Murinae</taxon>
        <taxon>Mus</taxon>
        <taxon>Mus</taxon>
    </lineage>
</organism>
<evidence type="ECO:0000255" key="1">
    <source>
        <dbReference type="PROSITE-ProRule" id="PRU00114"/>
    </source>
</evidence>
<feature type="chain" id="PRO_0000059782" description="Ig kappa chain V-III region TEPC 124">
    <location>
        <begin position="1"/>
        <end position="112" status="greater than"/>
    </location>
</feature>
<feature type="region of interest" description="Framework-1">
    <location>
        <begin position="1"/>
        <end position="23"/>
    </location>
</feature>
<feature type="region of interest" description="Complementarity-determining-1">
    <location>
        <begin position="24"/>
        <end position="38"/>
    </location>
</feature>
<feature type="region of interest" description="Framework-2">
    <location>
        <begin position="39"/>
        <end position="53"/>
    </location>
</feature>
<feature type="region of interest" description="Complementarity-determining-2">
    <location>
        <begin position="54"/>
        <end position="60"/>
    </location>
</feature>
<feature type="region of interest" description="Framework-3">
    <location>
        <begin position="61"/>
        <end position="92"/>
    </location>
</feature>
<feature type="region of interest" description="Complementarity-determining-3">
    <location>
        <begin position="93"/>
        <end position="101"/>
    </location>
</feature>
<feature type="region of interest" description="Framework-4">
    <location>
        <begin position="102"/>
        <end position="111"/>
    </location>
</feature>
<feature type="disulfide bond" evidence="1">
    <location>
        <begin position="23"/>
        <end position="92"/>
    </location>
</feature>
<feature type="non-terminal residue">
    <location>
        <position position="112"/>
    </location>
</feature>
<accession>P01659</accession>
<dbReference type="FunCoup" id="P01659">
    <property type="interactions" value="734"/>
</dbReference>
<dbReference type="jPOST" id="P01659"/>
<dbReference type="InParanoid" id="P01659"/>
<dbReference type="Proteomes" id="UP000000589">
    <property type="component" value="Unplaced"/>
</dbReference>
<dbReference type="RNAct" id="P01659">
    <property type="molecule type" value="protein"/>
</dbReference>
<dbReference type="GO" id="GO:0019814">
    <property type="term" value="C:immunoglobulin complex"/>
    <property type="evidence" value="ECO:0000318"/>
    <property type="project" value="GO_Central"/>
</dbReference>
<dbReference type="GO" id="GO:0002250">
    <property type="term" value="P:adaptive immune response"/>
    <property type="evidence" value="ECO:0007669"/>
    <property type="project" value="UniProtKB-KW"/>
</dbReference>
<dbReference type="GO" id="GO:0006955">
    <property type="term" value="P:immune response"/>
    <property type="evidence" value="ECO:0000318"/>
    <property type="project" value="GO_Central"/>
</dbReference>
<dbReference type="CDD" id="cd04980">
    <property type="entry name" value="IgV_L_kappa"/>
    <property type="match status" value="1"/>
</dbReference>
<dbReference type="FunFam" id="2.60.40.10:FF:000350">
    <property type="entry name" value="Immunoglobulin kappa chain variable 18-36"/>
    <property type="match status" value="1"/>
</dbReference>
<dbReference type="Gene3D" id="2.60.40.10">
    <property type="entry name" value="Immunoglobulins"/>
    <property type="match status" value="1"/>
</dbReference>
<dbReference type="InterPro" id="IPR007110">
    <property type="entry name" value="Ig-like_dom"/>
</dbReference>
<dbReference type="InterPro" id="IPR036179">
    <property type="entry name" value="Ig-like_dom_sf"/>
</dbReference>
<dbReference type="InterPro" id="IPR013783">
    <property type="entry name" value="Ig-like_fold"/>
</dbReference>
<dbReference type="InterPro" id="IPR003599">
    <property type="entry name" value="Ig_sub"/>
</dbReference>
<dbReference type="InterPro" id="IPR013106">
    <property type="entry name" value="Ig_V-set"/>
</dbReference>
<dbReference type="InterPro" id="IPR050150">
    <property type="entry name" value="IgV_Light_Chain"/>
</dbReference>
<dbReference type="PANTHER" id="PTHR23267">
    <property type="entry name" value="IMMUNOGLOBULIN LIGHT CHAIN"/>
    <property type="match status" value="1"/>
</dbReference>
<dbReference type="Pfam" id="PF07686">
    <property type="entry name" value="V-set"/>
    <property type="match status" value="1"/>
</dbReference>
<dbReference type="SMART" id="SM00409">
    <property type="entry name" value="IG"/>
    <property type="match status" value="1"/>
</dbReference>
<dbReference type="SMART" id="SM00406">
    <property type="entry name" value="IGv"/>
    <property type="match status" value="1"/>
</dbReference>
<dbReference type="SUPFAM" id="SSF48726">
    <property type="entry name" value="Immunoglobulin"/>
    <property type="match status" value="1"/>
</dbReference>
<dbReference type="PROSITE" id="PS50835">
    <property type="entry name" value="IG_LIKE"/>
    <property type="match status" value="1"/>
</dbReference>
<reference key="1">
    <citation type="journal article" date="1973" name="Biochemistry">
        <title>Mouse immunoglobulin chains. Pattern of sequence variation among kappa chains with limited sequence differences.</title>
        <authorList>
            <person name="McKean D.J."/>
            <person name="Potter M."/>
            <person name="Hood L.E."/>
        </authorList>
    </citation>
    <scope>PROTEIN SEQUENCE</scope>
</reference>
<keyword id="KW-1064">Adaptive immunity</keyword>
<keyword id="KW-0903">Direct protein sequencing</keyword>
<keyword id="KW-1015">Disulfide bond</keyword>
<keyword id="KW-0391">Immunity</keyword>
<keyword id="KW-1280">Immunoglobulin</keyword>
<keyword id="KW-1185">Reference proteome</keyword>
<name>KV3A7_MOUSE</name>